<dbReference type="EC" id="3.6.4.13"/>
<dbReference type="EMBL" id="AB010077">
    <property type="protein sequence ID" value="BAB10208.1"/>
    <property type="status" value="ALT_SEQ"/>
    <property type="molecule type" value="Genomic_DNA"/>
</dbReference>
<dbReference type="EMBL" id="AB024023">
    <property type="protein sequence ID" value="BAB10208.1"/>
    <property type="status" value="JOINED"/>
    <property type="molecule type" value="Genomic_DNA"/>
</dbReference>
<dbReference type="EMBL" id="CP002688">
    <property type="protein sequence ID" value="AED94482.1"/>
    <property type="molecule type" value="Genomic_DNA"/>
</dbReference>
<dbReference type="RefSeq" id="NP_198800.1">
    <property type="nucleotide sequence ID" value="NM_123347.2"/>
</dbReference>
<dbReference type="SMR" id="F4KFV7"/>
<dbReference type="FunCoup" id="F4KFV7">
    <property type="interactions" value="3611"/>
</dbReference>
<dbReference type="STRING" id="3702.F4KFV7"/>
<dbReference type="GlyGen" id="F4KFV7">
    <property type="glycosylation" value="1 site"/>
</dbReference>
<dbReference type="PaxDb" id="3702-AT5G39840.1"/>
<dbReference type="ProteomicsDB" id="226793"/>
<dbReference type="EnsemblPlants" id="AT5G39840.1">
    <property type="protein sequence ID" value="AT5G39840.1"/>
    <property type="gene ID" value="AT5G39840"/>
</dbReference>
<dbReference type="GeneID" id="833980"/>
<dbReference type="Gramene" id="AT5G39840.1">
    <property type="protein sequence ID" value="AT5G39840.1"/>
    <property type="gene ID" value="AT5G39840"/>
</dbReference>
<dbReference type="KEGG" id="ath:AT5G39840"/>
<dbReference type="Araport" id="AT5G39840"/>
<dbReference type="TAIR" id="AT5G39840"/>
<dbReference type="eggNOG" id="KOG0953">
    <property type="taxonomic scope" value="Eukaryota"/>
</dbReference>
<dbReference type="HOGENOM" id="CLU_010647_3_1_1"/>
<dbReference type="InParanoid" id="F4KFV7"/>
<dbReference type="OMA" id="AKNGLYC"/>
<dbReference type="PRO" id="PR:F4KFV7"/>
<dbReference type="Proteomes" id="UP000006548">
    <property type="component" value="Chromosome 5"/>
</dbReference>
<dbReference type="ExpressionAtlas" id="F4KFV7">
    <property type="expression patterns" value="baseline and differential"/>
</dbReference>
<dbReference type="GO" id="GO:0042645">
    <property type="term" value="C:mitochondrial nucleoid"/>
    <property type="evidence" value="ECO:0007669"/>
    <property type="project" value="UniProtKB-SubCell"/>
</dbReference>
<dbReference type="GO" id="GO:0005634">
    <property type="term" value="C:nucleus"/>
    <property type="evidence" value="ECO:0007669"/>
    <property type="project" value="UniProtKB-SubCell"/>
</dbReference>
<dbReference type="GO" id="GO:0005524">
    <property type="term" value="F:ATP binding"/>
    <property type="evidence" value="ECO:0007669"/>
    <property type="project" value="UniProtKB-KW"/>
</dbReference>
<dbReference type="GO" id="GO:0016887">
    <property type="term" value="F:ATP hydrolysis activity"/>
    <property type="evidence" value="ECO:0007669"/>
    <property type="project" value="RHEA"/>
</dbReference>
<dbReference type="GO" id="GO:0003723">
    <property type="term" value="F:RNA binding"/>
    <property type="evidence" value="ECO:0007669"/>
    <property type="project" value="UniProtKB-KW"/>
</dbReference>
<dbReference type="GO" id="GO:0003724">
    <property type="term" value="F:RNA helicase activity"/>
    <property type="evidence" value="ECO:0007669"/>
    <property type="project" value="UniProtKB-EC"/>
</dbReference>
<dbReference type="GO" id="GO:0016070">
    <property type="term" value="P:RNA metabolic process"/>
    <property type="evidence" value="ECO:0007669"/>
    <property type="project" value="UniProtKB-ARBA"/>
</dbReference>
<dbReference type="CDD" id="cd17913">
    <property type="entry name" value="DEXQc_Suv3"/>
    <property type="match status" value="1"/>
</dbReference>
<dbReference type="CDD" id="cd18805">
    <property type="entry name" value="SF2_C_suv3"/>
    <property type="match status" value="1"/>
</dbReference>
<dbReference type="FunFam" id="3.40.50.300:FF:000269">
    <property type="entry name" value="ATP-dependent RNA helicase SUPV3L1, mitochondrial"/>
    <property type="match status" value="1"/>
</dbReference>
<dbReference type="FunFam" id="1.20.272.40:FF:000003">
    <property type="entry name" value="ATP-dependent RNA helicase SUV3L, mitochondrial"/>
    <property type="match status" value="1"/>
</dbReference>
<dbReference type="FunFam" id="3.40.50.300:FF:000957">
    <property type="entry name" value="ATP-dependent RNA helicase SUV3L, mitochondrial"/>
    <property type="match status" value="1"/>
</dbReference>
<dbReference type="Gene3D" id="1.20.272.40">
    <property type="match status" value="1"/>
</dbReference>
<dbReference type="Gene3D" id="1.20.58.1080">
    <property type="match status" value="1"/>
</dbReference>
<dbReference type="Gene3D" id="3.40.50.300">
    <property type="entry name" value="P-loop containing nucleotide triphosphate hydrolases"/>
    <property type="match status" value="2"/>
</dbReference>
<dbReference type="InterPro" id="IPR056377">
    <property type="entry name" value="DExH18_N"/>
</dbReference>
<dbReference type="InterPro" id="IPR055206">
    <property type="entry name" value="DEXQc_SUV3"/>
</dbReference>
<dbReference type="InterPro" id="IPR014001">
    <property type="entry name" value="Helicase_ATP-bd"/>
</dbReference>
<dbReference type="InterPro" id="IPR001650">
    <property type="entry name" value="Helicase_C-like"/>
</dbReference>
<dbReference type="InterPro" id="IPR027417">
    <property type="entry name" value="P-loop_NTPase"/>
</dbReference>
<dbReference type="InterPro" id="IPR050699">
    <property type="entry name" value="RNA-DNA_Helicase"/>
</dbReference>
<dbReference type="InterPro" id="IPR022192">
    <property type="entry name" value="SUV3_C"/>
</dbReference>
<dbReference type="InterPro" id="IPR041082">
    <property type="entry name" value="Suv3_C_1"/>
</dbReference>
<dbReference type="InterPro" id="IPR044774">
    <property type="entry name" value="Suv3_DEXQc"/>
</dbReference>
<dbReference type="PANTHER" id="PTHR12131">
    <property type="entry name" value="ATP-DEPENDENT RNA AND DNA HELICASE"/>
    <property type="match status" value="1"/>
</dbReference>
<dbReference type="PANTHER" id="PTHR12131:SF28">
    <property type="entry name" value="DEXH-BOX ATP-DEPENDENT RNA HELICASE DEXH18, MITOCHONDRIAL"/>
    <property type="match status" value="1"/>
</dbReference>
<dbReference type="Pfam" id="PF23703">
    <property type="entry name" value="DExH18_N"/>
    <property type="match status" value="1"/>
</dbReference>
<dbReference type="Pfam" id="PF22527">
    <property type="entry name" value="DEXQc_Suv3"/>
    <property type="match status" value="1"/>
</dbReference>
<dbReference type="Pfam" id="PF00271">
    <property type="entry name" value="Helicase_C"/>
    <property type="match status" value="1"/>
</dbReference>
<dbReference type="Pfam" id="PF12513">
    <property type="entry name" value="SUV3_C"/>
    <property type="match status" value="1"/>
</dbReference>
<dbReference type="Pfam" id="PF18147">
    <property type="entry name" value="Suv3_C_1"/>
    <property type="match status" value="1"/>
</dbReference>
<dbReference type="SMART" id="SM00487">
    <property type="entry name" value="DEXDc"/>
    <property type="match status" value="1"/>
</dbReference>
<dbReference type="SMART" id="SM00490">
    <property type="entry name" value="HELICc"/>
    <property type="match status" value="1"/>
</dbReference>
<dbReference type="SUPFAM" id="SSF52540">
    <property type="entry name" value="P-loop containing nucleoside triphosphate hydrolases"/>
    <property type="match status" value="1"/>
</dbReference>
<dbReference type="PROSITE" id="PS51192">
    <property type="entry name" value="HELICASE_ATP_BIND_1"/>
    <property type="match status" value="1"/>
</dbReference>
<dbReference type="PROSITE" id="PS51194">
    <property type="entry name" value="HELICASE_CTER"/>
    <property type="match status" value="1"/>
</dbReference>
<name>SUV3L_ARATH</name>
<evidence type="ECO:0000250" key="1">
    <source>
        <dbReference type="UniProtKB" id="Q80YD1"/>
    </source>
</evidence>
<evidence type="ECO:0000250" key="2">
    <source>
        <dbReference type="UniProtKB" id="Q8IYB8"/>
    </source>
</evidence>
<evidence type="ECO:0000250" key="3">
    <source>
        <dbReference type="UniProtKB" id="Q9SMX1"/>
    </source>
</evidence>
<evidence type="ECO:0000255" key="4"/>
<evidence type="ECO:0000255" key="5">
    <source>
        <dbReference type="PROSITE-ProRule" id="PRU00541"/>
    </source>
</evidence>
<evidence type="ECO:0000255" key="6">
    <source>
        <dbReference type="PROSITE-ProRule" id="PRU00542"/>
    </source>
</evidence>
<evidence type="ECO:0000256" key="7">
    <source>
        <dbReference type="SAM" id="MobiDB-lite"/>
    </source>
</evidence>
<evidence type="ECO:0000305" key="8"/>
<evidence type="ECO:0000312" key="9">
    <source>
        <dbReference type="Araport" id="AT5G39840"/>
    </source>
</evidence>
<evidence type="ECO:0000312" key="10">
    <source>
        <dbReference type="EMBL" id="BAB10208.1"/>
    </source>
</evidence>
<evidence type="ECO:0000312" key="11">
    <source>
        <dbReference type="Proteomes" id="UP000006548"/>
    </source>
</evidence>
<organism evidence="11">
    <name type="scientific">Arabidopsis thaliana</name>
    <name type="common">Mouse-ear cress</name>
    <dbReference type="NCBI Taxonomy" id="3702"/>
    <lineage>
        <taxon>Eukaryota</taxon>
        <taxon>Viridiplantae</taxon>
        <taxon>Streptophyta</taxon>
        <taxon>Embryophyta</taxon>
        <taxon>Tracheophyta</taxon>
        <taxon>Spermatophyta</taxon>
        <taxon>Magnoliopsida</taxon>
        <taxon>eudicotyledons</taxon>
        <taxon>Gunneridae</taxon>
        <taxon>Pentapetalae</taxon>
        <taxon>rosids</taxon>
        <taxon>malvids</taxon>
        <taxon>Brassicales</taxon>
        <taxon>Brassicaceae</taxon>
        <taxon>Camelineae</taxon>
        <taxon>Arabidopsis</taxon>
    </lineage>
</organism>
<keyword id="KW-0067">ATP-binding</keyword>
<keyword id="KW-0347">Helicase</keyword>
<keyword id="KW-0378">Hydrolase</keyword>
<keyword id="KW-0496">Mitochondrion</keyword>
<keyword id="KW-1135">Mitochondrion nucleoid</keyword>
<keyword id="KW-0547">Nucleotide-binding</keyword>
<keyword id="KW-0539">Nucleus</keyword>
<keyword id="KW-1185">Reference proteome</keyword>
<keyword id="KW-0694">RNA-binding</keyword>
<keyword id="KW-0809">Transit peptide</keyword>
<sequence>MARGVAGVLRRAYSSRVTVLFSTRNLHSFRESESRSLCNSDFDVPTNRFCSGNRVRIQFPWNDYRFGCFEIGKVRSFSSTVDNNGENDDIEESVGSESDDYDEEGLINELSDVDEGLLNDSVVAETDEIGSEAARALNDRYHDPVELYRELRGSEVRSKLQHSEWDSLHEIFGFFAQSGWAANQALAIYIGKSFFPTAVSKFRDFFIEKCGIEVVQDLVRVGPTDVAVKFLFPVFVEFCIEEFPDEIKRFKSIVDTADLTKPATWFPFARAMKRKIVYHCGPTNSGKTYNALQRFMEAKNGLYCSPLRLLAMEVFDKVNALGIYCSLLTGQEKKYVPFANHVSCTVEMVSTDELYEVAVLDEIQMMADPSRGHAWTKALLGLKADEIHLCGDPSVLDIVRKMCADTGDELVEEHYERFKPLVVEAKTLLGELKNVKSGDCVVAFSRREIFEVKMAIEKHTNHRCCVIYGALPPETRRQQAKLFNDQENEYDVLVASDAVGMGLNLNIRRVVFYSLNKYNGDKIVPVAASQVKQIAGRAGRRGSRYPDGLTTTLHLEDLNYLIECLQQPFDEVTKVGLFPFFEQIELFAAQVPDMAFSNLLEHFGKHCRLDGSYFLCRHDHVKKVANMLEKVEGLSLEDRFNFCFAPVNIRNPRAMHNLYRFASSYSQNMPVNVAMGIPKSSAKSDAQLLDLESRHQILSMYLWLSNQFEENFPFVEKVEAMATNIAELLGESLSKASWKMESKEEKVKGQMKEDRGYERPASLIKLVKKRKDEKLV</sequence>
<protein>
    <recommendedName>
        <fullName evidence="8">DExH-box ATP-dependent RNA helicase DExH18, mitochondrial</fullName>
        <ecNumber>3.6.4.13</ecNumber>
    </recommendedName>
    <alternativeName>
        <fullName evidence="8">ATP-dependent RNA helicase SUV3L</fullName>
        <shortName>AtSUV3L</shortName>
    </alternativeName>
    <alternativeName>
        <fullName evidence="8">Protein SUPPRESSOR OF VAR 3-like</fullName>
    </alternativeName>
</protein>
<reference key="1">
    <citation type="journal article" date="1998" name="DNA Res.">
        <title>Structural analysis of Arabidopsis thaliana chromosome 5. IV. Sequence features of the regions of 1,456,315 bp covered by nineteen physically assigned P1 and TAC clones.</title>
        <authorList>
            <person name="Sato S."/>
            <person name="Kaneko T."/>
            <person name="Kotani H."/>
            <person name="Nakamura Y."/>
            <person name="Asamizu E."/>
            <person name="Miyajima N."/>
            <person name="Tabata S."/>
        </authorList>
    </citation>
    <scope>NUCLEOTIDE SEQUENCE [LARGE SCALE GENOMIC DNA]</scope>
    <source>
        <strain>cv. Columbia</strain>
    </source>
</reference>
<reference key="2">
    <citation type="submission" date="1999-02" db="EMBL/GenBank/DDBJ databases">
        <title>Structural analysis of Arabidopsis thaliana chromosome 5. XI.</title>
        <authorList>
            <person name="Kaneko T."/>
            <person name="Katoh T."/>
            <person name="Asamizu E."/>
            <person name="Sato S."/>
            <person name="Nakamura Y."/>
            <person name="Kotani H."/>
            <person name="Tabata S."/>
        </authorList>
    </citation>
    <scope>NUCLEOTIDE SEQUENCE [LARGE SCALE GENOMIC DNA]</scope>
    <source>
        <strain>cv. Columbia</strain>
    </source>
</reference>
<reference key="3">
    <citation type="journal article" date="2017" name="Plant J.">
        <title>Araport11: a complete reannotation of the Arabidopsis thaliana reference genome.</title>
        <authorList>
            <person name="Cheng C.Y."/>
            <person name="Krishnakumar V."/>
            <person name="Chan A.P."/>
            <person name="Thibaud-Nissen F."/>
            <person name="Schobel S."/>
            <person name="Town C.D."/>
        </authorList>
    </citation>
    <scope>GENOME REANNOTATION</scope>
    <source>
        <strain>cv. Columbia</strain>
    </source>
</reference>
<reference key="4">
    <citation type="journal article" date="2013" name="PLoS ONE">
        <title>Genome-wide comparative in silico analysis of the RNA helicase gene family in Zea mays and Glycine max: a comparison with Arabidopsis and Oryza sativa.</title>
        <authorList>
            <person name="Xu R."/>
            <person name="Zhang S."/>
            <person name="Huang J."/>
            <person name="Zheng C."/>
        </authorList>
    </citation>
    <scope>GENE FAMILY</scope>
</reference>
<proteinExistence type="inferred from homology"/>
<comment type="function">
    <text evidence="2">Major helicase player in mitochondrial RNA metabolism. Component of the mitochondrial degradosome (mtEXO) complex, that degrades 3' overhang double-stranded RNA with a 3'-to-5' directionality in an ATP-dependent manner. ATPase and ATP-dependent multisubstrate helicase, able to unwind double-stranded (ds) DNA and RNA, and RNA/DNA heteroduplexes in the 5'-to-3' direction. Plays a role in the RNA surveillance system in mitochondria; regulates the stability of mature mRNAs, the removal of aberrantly formed mRNAs and the rapid degradation of non coding processing intermediates.</text>
</comment>
<comment type="catalytic activity">
    <reaction evidence="3">
        <text>ATP + H2O = ADP + phosphate + H(+)</text>
        <dbReference type="Rhea" id="RHEA:13065"/>
        <dbReference type="ChEBI" id="CHEBI:15377"/>
        <dbReference type="ChEBI" id="CHEBI:15378"/>
        <dbReference type="ChEBI" id="CHEBI:30616"/>
        <dbReference type="ChEBI" id="CHEBI:43474"/>
        <dbReference type="ChEBI" id="CHEBI:456216"/>
        <dbReference type="EC" id="3.6.4.13"/>
    </reaction>
</comment>
<comment type="cofactor">
    <cofactor evidence="2">
        <name>Mg(2+)</name>
        <dbReference type="ChEBI" id="CHEBI:18420"/>
    </cofactor>
    <cofactor evidence="2">
        <name>Mn(2+)</name>
        <dbReference type="ChEBI" id="CHEBI:29035"/>
    </cofactor>
</comment>
<comment type="subunit">
    <text evidence="2">Homodimer; in free form. Component of the mitochondrial degradosome (mtEXO) complex which is a heteropentamer containing 2 copies of SUPV3L1 and 3 copies of PNPT1.</text>
</comment>
<comment type="subcellular location">
    <subcellularLocation>
        <location evidence="2">Nucleus</location>
    </subcellularLocation>
    <subcellularLocation>
        <location evidence="3">Mitochondrion matrix</location>
    </subcellularLocation>
    <subcellularLocation>
        <location evidence="2">Mitochondrion matrix</location>
        <location evidence="2">Mitochondrion nucleoid</location>
    </subcellularLocation>
</comment>
<comment type="similarity">
    <text evidence="8">Belongs to the DExH box helicase family.</text>
</comment>
<comment type="sequence caution" evidence="8">
    <conflict type="erroneous gene model prediction">
        <sequence resource="EMBL-CDS" id="BAB10208"/>
    </conflict>
</comment>
<accession>F4KFV7</accession>
<accession>Q9FLF1</accession>
<feature type="transit peptide" description="Mitochondrion" evidence="4">
    <location>
        <begin position="1"/>
        <end position="84"/>
    </location>
</feature>
<feature type="chain" id="PRO_0000431537" description="DExH-box ATP-dependent RNA helicase DExH18, mitochondrial" evidence="4">
    <location>
        <begin position="85"/>
        <end position="776"/>
    </location>
</feature>
<feature type="domain" description="Helicase ATP-binding" evidence="1">
    <location>
        <begin position="268"/>
        <end position="426"/>
    </location>
</feature>
<feature type="domain" description="Helicase C-terminal" evidence="6">
    <location>
        <begin position="427"/>
        <end position="595"/>
    </location>
</feature>
<feature type="region of interest" description="Disordered" evidence="7">
    <location>
        <begin position="80"/>
        <end position="101"/>
    </location>
</feature>
<feature type="short sequence motif" description="DEIH box; degenerate" evidence="8">
    <location>
        <begin position="361"/>
        <end position="364"/>
    </location>
</feature>
<feature type="compositionally biased region" description="Acidic residues" evidence="7">
    <location>
        <begin position="85"/>
        <end position="101"/>
    </location>
</feature>
<feature type="binding site" evidence="5">
    <location>
        <begin position="281"/>
        <end position="288"/>
    </location>
    <ligand>
        <name>ATP</name>
        <dbReference type="ChEBI" id="CHEBI:30616"/>
    </ligand>
</feature>
<gene>
    <name evidence="9" type="ordered locus">At5g39840</name>
    <name evidence="10" type="ORF">K13H13.20</name>
</gene>